<organism>
    <name type="scientific">Histophilus somni (strain 2336)</name>
    <name type="common">Haemophilus somnus</name>
    <dbReference type="NCBI Taxonomy" id="228400"/>
    <lineage>
        <taxon>Bacteria</taxon>
        <taxon>Pseudomonadati</taxon>
        <taxon>Pseudomonadota</taxon>
        <taxon>Gammaproteobacteria</taxon>
        <taxon>Pasteurellales</taxon>
        <taxon>Pasteurellaceae</taxon>
        <taxon>Histophilus</taxon>
    </lineage>
</organism>
<name>ACKA_HISS2</name>
<dbReference type="EC" id="2.7.2.1" evidence="1"/>
<dbReference type="EMBL" id="CP000947">
    <property type="protein sequence ID" value="ACA31001.1"/>
    <property type="molecule type" value="Genomic_DNA"/>
</dbReference>
<dbReference type="RefSeq" id="WP_012340432.1">
    <property type="nucleotide sequence ID" value="NC_010519.1"/>
</dbReference>
<dbReference type="SMR" id="B0UTZ5"/>
<dbReference type="STRING" id="228400.HSM_1272"/>
<dbReference type="GeneID" id="31487574"/>
<dbReference type="KEGG" id="hsm:HSM_1272"/>
<dbReference type="HOGENOM" id="CLU_020352_0_0_6"/>
<dbReference type="UniPathway" id="UPA00340">
    <property type="reaction ID" value="UER00458"/>
</dbReference>
<dbReference type="GO" id="GO:0005829">
    <property type="term" value="C:cytosol"/>
    <property type="evidence" value="ECO:0007669"/>
    <property type="project" value="TreeGrafter"/>
</dbReference>
<dbReference type="GO" id="GO:0008776">
    <property type="term" value="F:acetate kinase activity"/>
    <property type="evidence" value="ECO:0007669"/>
    <property type="project" value="UniProtKB-UniRule"/>
</dbReference>
<dbReference type="GO" id="GO:0005524">
    <property type="term" value="F:ATP binding"/>
    <property type="evidence" value="ECO:0007669"/>
    <property type="project" value="UniProtKB-KW"/>
</dbReference>
<dbReference type="GO" id="GO:0000287">
    <property type="term" value="F:magnesium ion binding"/>
    <property type="evidence" value="ECO:0007669"/>
    <property type="project" value="UniProtKB-UniRule"/>
</dbReference>
<dbReference type="GO" id="GO:0006083">
    <property type="term" value="P:acetate metabolic process"/>
    <property type="evidence" value="ECO:0007669"/>
    <property type="project" value="TreeGrafter"/>
</dbReference>
<dbReference type="GO" id="GO:0006085">
    <property type="term" value="P:acetyl-CoA biosynthetic process"/>
    <property type="evidence" value="ECO:0007669"/>
    <property type="project" value="UniProtKB-UniRule"/>
</dbReference>
<dbReference type="CDD" id="cd24010">
    <property type="entry name" value="ASKHA_NBD_AcK_PK"/>
    <property type="match status" value="1"/>
</dbReference>
<dbReference type="FunFam" id="3.30.420.40:FF:000041">
    <property type="entry name" value="Acetate kinase"/>
    <property type="match status" value="1"/>
</dbReference>
<dbReference type="FunFam" id="3.30.420.40:FF:000042">
    <property type="entry name" value="Acetate kinase"/>
    <property type="match status" value="1"/>
</dbReference>
<dbReference type="Gene3D" id="3.30.420.40">
    <property type="match status" value="2"/>
</dbReference>
<dbReference type="HAMAP" id="MF_00020">
    <property type="entry name" value="Acetate_kinase"/>
    <property type="match status" value="1"/>
</dbReference>
<dbReference type="InterPro" id="IPR004372">
    <property type="entry name" value="Ac/propionate_kinase"/>
</dbReference>
<dbReference type="InterPro" id="IPR000890">
    <property type="entry name" value="Aliphatic_acid_kin_short-chain"/>
</dbReference>
<dbReference type="InterPro" id="IPR023865">
    <property type="entry name" value="Aliphatic_acid_kinase_CS"/>
</dbReference>
<dbReference type="InterPro" id="IPR043129">
    <property type="entry name" value="ATPase_NBD"/>
</dbReference>
<dbReference type="NCBIfam" id="TIGR00016">
    <property type="entry name" value="ackA"/>
    <property type="match status" value="1"/>
</dbReference>
<dbReference type="PANTHER" id="PTHR21060">
    <property type="entry name" value="ACETATE KINASE"/>
    <property type="match status" value="1"/>
</dbReference>
<dbReference type="PANTHER" id="PTHR21060:SF21">
    <property type="entry name" value="ACETATE KINASE"/>
    <property type="match status" value="1"/>
</dbReference>
<dbReference type="Pfam" id="PF00871">
    <property type="entry name" value="Acetate_kinase"/>
    <property type="match status" value="1"/>
</dbReference>
<dbReference type="PIRSF" id="PIRSF000722">
    <property type="entry name" value="Acetate_prop_kin"/>
    <property type="match status" value="1"/>
</dbReference>
<dbReference type="PRINTS" id="PR00471">
    <property type="entry name" value="ACETATEKNASE"/>
</dbReference>
<dbReference type="SUPFAM" id="SSF53067">
    <property type="entry name" value="Actin-like ATPase domain"/>
    <property type="match status" value="2"/>
</dbReference>
<dbReference type="PROSITE" id="PS01075">
    <property type="entry name" value="ACETATE_KINASE_1"/>
    <property type="match status" value="1"/>
</dbReference>
<dbReference type="PROSITE" id="PS01076">
    <property type="entry name" value="ACETATE_KINASE_2"/>
    <property type="match status" value="1"/>
</dbReference>
<reference key="1">
    <citation type="submission" date="2008-02" db="EMBL/GenBank/DDBJ databases">
        <title>Complete sequence of Haemophilus somnus 2336.</title>
        <authorList>
            <consortium name="US DOE Joint Genome Institute"/>
            <person name="Siddaramappa S."/>
            <person name="Duncan A.J."/>
            <person name="Challacombe J.F."/>
            <person name="Rainey D."/>
            <person name="Gillaspy A.F."/>
            <person name="Carson M."/>
            <person name="Gipson J."/>
            <person name="Gipson M."/>
            <person name="Bruce D."/>
            <person name="Detter J.C."/>
            <person name="Han C.S."/>
            <person name="Land M."/>
            <person name="Tapia R."/>
            <person name="Thompson L.S."/>
            <person name="Orvis J."/>
            <person name="Zaitshik J."/>
            <person name="Barnes G."/>
            <person name="Brettin T.S."/>
            <person name="Dyer D.W."/>
            <person name="Inzana T.J."/>
        </authorList>
    </citation>
    <scope>NUCLEOTIDE SEQUENCE [LARGE SCALE GENOMIC DNA]</scope>
    <source>
        <strain>2336</strain>
    </source>
</reference>
<comment type="function">
    <text evidence="1">Catalyzes the formation of acetyl phosphate from acetate and ATP. Can also catalyze the reverse reaction.</text>
</comment>
<comment type="catalytic activity">
    <reaction evidence="1">
        <text>acetate + ATP = acetyl phosphate + ADP</text>
        <dbReference type="Rhea" id="RHEA:11352"/>
        <dbReference type="ChEBI" id="CHEBI:22191"/>
        <dbReference type="ChEBI" id="CHEBI:30089"/>
        <dbReference type="ChEBI" id="CHEBI:30616"/>
        <dbReference type="ChEBI" id="CHEBI:456216"/>
        <dbReference type="EC" id="2.7.2.1"/>
    </reaction>
</comment>
<comment type="cofactor">
    <cofactor evidence="1">
        <name>Mg(2+)</name>
        <dbReference type="ChEBI" id="CHEBI:18420"/>
    </cofactor>
    <cofactor evidence="1">
        <name>Mn(2+)</name>
        <dbReference type="ChEBI" id="CHEBI:29035"/>
    </cofactor>
    <text evidence="1">Mg(2+). Can also accept Mn(2+).</text>
</comment>
<comment type="pathway">
    <text evidence="1">Metabolic intermediate biosynthesis; acetyl-CoA biosynthesis; acetyl-CoA from acetate: step 1/2.</text>
</comment>
<comment type="subunit">
    <text evidence="1">Homodimer.</text>
</comment>
<comment type="subcellular location">
    <subcellularLocation>
        <location evidence="1">Cytoplasm</location>
    </subcellularLocation>
</comment>
<comment type="similarity">
    <text evidence="1">Belongs to the acetokinase family.</text>
</comment>
<protein>
    <recommendedName>
        <fullName evidence="1">Acetate kinase</fullName>
        <ecNumber evidence="1">2.7.2.1</ecNumber>
    </recommendedName>
    <alternativeName>
        <fullName evidence="1">Acetokinase</fullName>
    </alternativeName>
</protein>
<sequence>MSQKLVLILNCGSSSLKFAILDPVSGAEKLSGLAEAFYLPDARIKWKLNGEKGNADLGAGAAHSEALNFIVSTILTEDLKNSIAAIGHRVVHGGEKYTKSVVITDEVIQGIKDAAEFAPLHNPAHLIGIEEAFKAFPHLKDNNVAVFDTAFHQTMPEEAFLYALPYSLYKEHGVRRYGMHGTSHYFVSREAAKRLNIAEDKINVITCHLGNGASVAAIRQGKCIDTSMGFTPLEGLVMGTRSGDLDPAIIFYMHNTLGMSVAQIEETLVKKSGLLGLTEVTSDCRYSEDNYEKESAAKRALDVFCYRLAKYIGSYMAIIGENLDAIVFTGGIGENAALVRQITLNHLKLFGYKIDDEKNSAARFGNEGVITADNTPIAIVIPTNEELVIAQDTARLSF</sequence>
<evidence type="ECO:0000255" key="1">
    <source>
        <dbReference type="HAMAP-Rule" id="MF_00020"/>
    </source>
</evidence>
<feature type="chain" id="PRO_1000074187" description="Acetate kinase">
    <location>
        <begin position="1"/>
        <end position="398"/>
    </location>
</feature>
<feature type="active site" description="Proton donor/acceptor" evidence="1">
    <location>
        <position position="148"/>
    </location>
</feature>
<feature type="binding site" evidence="1">
    <location>
        <position position="10"/>
    </location>
    <ligand>
        <name>Mg(2+)</name>
        <dbReference type="ChEBI" id="CHEBI:18420"/>
    </ligand>
</feature>
<feature type="binding site" evidence="1">
    <location>
        <position position="17"/>
    </location>
    <ligand>
        <name>ATP</name>
        <dbReference type="ChEBI" id="CHEBI:30616"/>
    </ligand>
</feature>
<feature type="binding site" evidence="1">
    <location>
        <position position="89"/>
    </location>
    <ligand>
        <name>substrate</name>
    </ligand>
</feature>
<feature type="binding site" evidence="1">
    <location>
        <begin position="208"/>
        <end position="212"/>
    </location>
    <ligand>
        <name>ATP</name>
        <dbReference type="ChEBI" id="CHEBI:30616"/>
    </ligand>
</feature>
<feature type="binding site" evidence="1">
    <location>
        <begin position="283"/>
        <end position="285"/>
    </location>
    <ligand>
        <name>ATP</name>
        <dbReference type="ChEBI" id="CHEBI:30616"/>
    </ligand>
</feature>
<feature type="binding site" evidence="1">
    <location>
        <begin position="331"/>
        <end position="335"/>
    </location>
    <ligand>
        <name>ATP</name>
        <dbReference type="ChEBI" id="CHEBI:30616"/>
    </ligand>
</feature>
<feature type="binding site" evidence="1">
    <location>
        <position position="385"/>
    </location>
    <ligand>
        <name>Mg(2+)</name>
        <dbReference type="ChEBI" id="CHEBI:18420"/>
    </ligand>
</feature>
<feature type="site" description="Transition state stabilizer" evidence="1">
    <location>
        <position position="180"/>
    </location>
</feature>
<feature type="site" description="Transition state stabilizer" evidence="1">
    <location>
        <position position="241"/>
    </location>
</feature>
<proteinExistence type="inferred from homology"/>
<keyword id="KW-0067">ATP-binding</keyword>
<keyword id="KW-0963">Cytoplasm</keyword>
<keyword id="KW-0418">Kinase</keyword>
<keyword id="KW-0460">Magnesium</keyword>
<keyword id="KW-0479">Metal-binding</keyword>
<keyword id="KW-0547">Nucleotide-binding</keyword>
<keyword id="KW-0808">Transferase</keyword>
<accession>B0UTZ5</accession>
<gene>
    <name evidence="1" type="primary">ackA</name>
    <name type="ordered locus">HSM_1272</name>
</gene>